<gene>
    <name evidence="6 12" type="primary">rft-2</name>
    <name evidence="12" type="ORF">Y47D7A.14</name>
</gene>
<evidence type="ECO:0000255" key="1"/>
<evidence type="ECO:0000255" key="2">
    <source>
        <dbReference type="PROSITE-ProRule" id="PRU00498"/>
    </source>
</evidence>
<evidence type="ECO:0000256" key="3">
    <source>
        <dbReference type="SAM" id="MobiDB-lite"/>
    </source>
</evidence>
<evidence type="ECO:0000269" key="4">
    <source>
    </source>
</evidence>
<evidence type="ECO:0000269" key="5">
    <source>
    </source>
</evidence>
<evidence type="ECO:0000303" key="6">
    <source>
    </source>
</evidence>
<evidence type="ECO:0000305" key="7"/>
<evidence type="ECO:0000312" key="8">
    <source>
        <dbReference type="EMBL" id="AFZ75250.1"/>
    </source>
</evidence>
<evidence type="ECO:0000312" key="9">
    <source>
        <dbReference type="EMBL" id="CCD69389.1"/>
    </source>
</evidence>
<evidence type="ECO:0000312" key="10">
    <source>
        <dbReference type="Proteomes" id="UP000001940"/>
    </source>
</evidence>
<evidence type="ECO:0000312" key="11">
    <source>
        <dbReference type="WormBase" id="Y47D7A.14a"/>
    </source>
</evidence>
<evidence type="ECO:0000312" key="12">
    <source>
        <dbReference type="WormBase" id="Y47D7A.14b"/>
    </source>
</evidence>
<evidence type="ECO:0000312" key="13">
    <source>
        <dbReference type="WormBase" id="Y47D7A.14c"/>
    </source>
</evidence>
<sequence>MGCSAATFILVALFGSSSWMGTNSVWMQLPLLTSELPEQWNLPSYLAGVVQIACIVPLIYTILHKGVKSFTIPTAPLIIALLSLACCCQLGLSFFWSDYSEIFGAPRSWPLYSLLFGLAIVNAMSNVLFMPFMAQFHPAYLNAYFVGMGLSSLAPSLLSLAQGTSMFKCDEKGVAERFPPNFSVSIFFFVIFSFTCVALFAFIALYRSGAHTHFATPNKKEPNEGTPLKKDLNNTSSSRKGDDEDESPIEIHETGAPAIDAIVSELDVTFREELQKSFRDANYLERSAMINDDSEPHPVDYITGVKFTFLLFTTALVNAQMNGIITSVQSYAALPYSQATYHFAVTLSNVVSPLSSFLPFFISVRSIPVLAILTACSTAMTAFIVYLAALSPNLIFNSVTIGSALSIGGSLIAAGLHSYLRVVFASLLREGHQSESRLFWCGVFIQIGSFIGSAVMFPLVNIAHLFTSAPQCKSIS</sequence>
<reference evidence="8" key="1">
    <citation type="submission" date="2012-09" db="EMBL/GenBank/DDBJ databases">
        <authorList>
            <person name="Salehi R."/>
            <person name="Fisher C.A."/>
            <person name="Bignell P.A."/>
            <person name="Old J.M."/>
        </authorList>
    </citation>
    <scope>NUCLEOTIDE SEQUENCE [MRNA] (ISOFORM A)</scope>
</reference>
<reference evidence="10" key="2">
    <citation type="journal article" date="1998" name="Science">
        <title>Genome sequence of the nematode C. elegans: a platform for investigating biology.</title>
        <authorList>
            <consortium name="The C. elegans sequencing consortium"/>
        </authorList>
    </citation>
    <scope>NUCLEOTIDE SEQUENCE [LARGE SCALE GENOMIC DNA]</scope>
    <source>
        <strain evidence="10">Bristol N2</strain>
    </source>
</reference>
<reference evidence="7" key="3">
    <citation type="journal article" date="2013" name="PLoS ONE">
        <title>Identification and functional characterization of the Caenorhabditis elegans riboflavin transporters rft-1 and rft-2.</title>
        <authorList>
            <person name="Biswas A."/>
            <person name="Elmatari D."/>
            <person name="Rothman J."/>
            <person name="LaMunyon C.W."/>
            <person name="Said H.M."/>
        </authorList>
    </citation>
    <scope>FUNCTION</scope>
    <scope>CATALYTIC ACTIVITY</scope>
    <scope>TISSUE SPECIFICITY</scope>
    <scope>INDUCTION</scope>
    <scope>DISRUPTION PHENOTYPE</scope>
</reference>
<reference evidence="7" key="4">
    <citation type="journal article" date="2015" name="J. Biosci.">
        <title>Riboflavin transporter-2 (rft-2) of Caenorhabditis elegans: Adaptive and developmental regulation.</title>
        <authorList>
            <person name="Gandhimathi K."/>
            <person name="Karthi S."/>
            <person name="Manimaran P."/>
            <person name="Varalakshmi P."/>
            <person name="Ashokkumar B."/>
        </authorList>
    </citation>
    <scope>TISSUE SPECIFICITY</scope>
    <scope>DEVELOPMENTAL STAGE</scope>
    <scope>INDUCTION</scope>
</reference>
<comment type="function">
    <text evidence="4">Riboflavin transporter.</text>
</comment>
<comment type="catalytic activity">
    <reaction evidence="4">
        <text>riboflavin(in) = riboflavin(out)</text>
        <dbReference type="Rhea" id="RHEA:35015"/>
        <dbReference type="ChEBI" id="CHEBI:57986"/>
    </reaction>
</comment>
<comment type="subcellular location">
    <subcellularLocation>
        <location evidence="7">Cell membrane</location>
        <topology evidence="1">Multi-pass membrane protein</topology>
    </subcellularLocation>
</comment>
<comment type="alternative products">
    <event type="alternative splicing"/>
    <isoform>
        <id>G4SDH4-1</id>
        <name evidence="12">b</name>
        <sequence type="displayed"/>
    </isoform>
    <isoform>
        <id>G4SDH4-2</id>
        <name evidence="11">a</name>
        <sequence type="described" ref="VSP_059271"/>
    </isoform>
    <isoform>
        <id>G4SDH4-3</id>
        <name evidence="13">c</name>
        <sequence type="described" ref="VSP_059270 VSP_059271"/>
    </isoform>
</comment>
<comment type="tissue specificity">
    <text evidence="4 5">Expressed in intestine and pharynx.</text>
</comment>
<comment type="developmental stage">
    <text evidence="5">Expressed in embryos, larvae and adults.</text>
</comment>
<comment type="induction">
    <text evidence="4 5">Down-regulated by high levels of riboflavin.</text>
</comment>
<comment type="disruption phenotype">
    <text evidence="4">RNAi-mediated knockdown causes a severe reduction in the number of laid eggs.</text>
</comment>
<comment type="similarity">
    <text evidence="7">Belongs to the riboflavin transporter family.</text>
</comment>
<name>S52AB_CAEEL</name>
<feature type="chain" id="PRO_0000442704" description="Riboflavin transporter rft-2">
    <location>
        <begin position="1"/>
        <end position="476"/>
    </location>
</feature>
<feature type="transmembrane region" description="Helical" evidence="1">
    <location>
        <begin position="1"/>
        <end position="21"/>
    </location>
</feature>
<feature type="topological domain" description="Cytoplasmic" evidence="7">
    <location>
        <begin position="22"/>
        <end position="41"/>
    </location>
</feature>
<feature type="transmembrane region" description="Helical" evidence="1">
    <location>
        <begin position="42"/>
        <end position="62"/>
    </location>
</feature>
<feature type="topological domain" description="Extracellular" evidence="7">
    <location>
        <begin position="63"/>
        <end position="75"/>
    </location>
</feature>
<feature type="transmembrane region" description="Helical" evidence="1">
    <location>
        <begin position="76"/>
        <end position="96"/>
    </location>
</feature>
<feature type="topological domain" description="Cytoplasmic" evidence="7">
    <location>
        <begin position="97"/>
        <end position="113"/>
    </location>
</feature>
<feature type="transmembrane region" description="Helical" evidence="1">
    <location>
        <begin position="114"/>
        <end position="134"/>
    </location>
</feature>
<feature type="topological domain" description="Extracellular" evidence="7">
    <location>
        <begin position="135"/>
        <end position="140"/>
    </location>
</feature>
<feature type="transmembrane region" description="Helical" evidence="1">
    <location>
        <begin position="141"/>
        <end position="161"/>
    </location>
</feature>
<feature type="topological domain" description="Cytoplasmic" evidence="7">
    <location>
        <begin position="162"/>
        <end position="185"/>
    </location>
</feature>
<feature type="transmembrane region" description="Helical" evidence="1">
    <location>
        <begin position="186"/>
        <end position="206"/>
    </location>
</feature>
<feature type="topological domain" description="Extracellular" evidence="7">
    <location>
        <begin position="207"/>
        <end position="306"/>
    </location>
</feature>
<feature type="transmembrane region" description="Helical" evidence="1">
    <location>
        <begin position="307"/>
        <end position="327"/>
    </location>
</feature>
<feature type="topological domain" description="Cytoplasmic" evidence="7">
    <location>
        <begin position="328"/>
        <end position="342"/>
    </location>
</feature>
<feature type="transmembrane region" description="Helical" evidence="1">
    <location>
        <begin position="343"/>
        <end position="363"/>
    </location>
</feature>
<feature type="topological domain" description="Extracellular" evidence="7">
    <location>
        <begin position="364"/>
        <end position="366"/>
    </location>
</feature>
<feature type="transmembrane region" description="Helical" evidence="1">
    <location>
        <begin position="367"/>
        <end position="387"/>
    </location>
</feature>
<feature type="topological domain" description="Cytoplasmic" evidence="7">
    <location>
        <begin position="388"/>
        <end position="393"/>
    </location>
</feature>
<feature type="transmembrane region" description="Helical" evidence="1">
    <location>
        <begin position="394"/>
        <end position="414"/>
    </location>
</feature>
<feature type="topological domain" description="Extracellular" evidence="7">
    <location>
        <begin position="415"/>
        <end position="437"/>
    </location>
</feature>
<feature type="transmembrane region" description="Helical" evidence="1">
    <location>
        <begin position="438"/>
        <end position="458"/>
    </location>
</feature>
<feature type="topological domain" description="Cytoplasmic" evidence="7">
    <location>
        <begin position="459"/>
        <end position="476"/>
    </location>
</feature>
<feature type="region of interest" description="Disordered" evidence="3">
    <location>
        <begin position="215"/>
        <end position="249"/>
    </location>
</feature>
<feature type="compositionally biased region" description="Basic and acidic residues" evidence="3">
    <location>
        <begin position="218"/>
        <end position="232"/>
    </location>
</feature>
<feature type="glycosylation site" description="N-linked (GlcNAc...) asparagine" evidence="2">
    <location>
        <position position="233"/>
    </location>
</feature>
<feature type="splice variant" id="VSP_059270" description="In isoform c." evidence="7">
    <location>
        <begin position="2"/>
        <end position="124"/>
    </location>
</feature>
<feature type="splice variant" id="VSP_059271" description="In isoform a and isoform c." evidence="7">
    <location>
        <begin position="273"/>
        <end position="285"/>
    </location>
</feature>
<protein>
    <recommendedName>
        <fullName evidence="9">Riboflavin transporter rft-2</fullName>
    </recommendedName>
    <alternativeName>
        <fullName evidence="7">Solute carrier family 52, riboflavin transporter rft-2</fullName>
    </alternativeName>
</protein>
<accession>G4SDH4</accession>
<accession>A0A168H3J9</accession>
<accession>G4SM24</accession>
<accession>Q95XZ2</accession>
<proteinExistence type="evidence at protein level"/>
<keyword id="KW-0025">Alternative splicing</keyword>
<keyword id="KW-1003">Cell membrane</keyword>
<keyword id="KW-0325">Glycoprotein</keyword>
<keyword id="KW-0472">Membrane</keyword>
<keyword id="KW-1185">Reference proteome</keyword>
<keyword id="KW-0812">Transmembrane</keyword>
<keyword id="KW-1133">Transmembrane helix</keyword>
<keyword id="KW-0813">Transport</keyword>
<dbReference type="EMBL" id="JX869968">
    <property type="protein sequence ID" value="AFZ75250.1"/>
    <property type="molecule type" value="mRNA"/>
</dbReference>
<dbReference type="EMBL" id="BX284605">
    <property type="protein sequence ID" value="CCD69388.1"/>
    <property type="molecule type" value="Genomic_DNA"/>
</dbReference>
<dbReference type="EMBL" id="BX284605">
    <property type="protein sequence ID" value="CCD69389.1"/>
    <property type="molecule type" value="Genomic_DNA"/>
</dbReference>
<dbReference type="EMBL" id="BX284605">
    <property type="protein sequence ID" value="SAP35550.1"/>
    <property type="molecule type" value="Genomic_DNA"/>
</dbReference>
<dbReference type="RefSeq" id="NP_001256040.1">
    <molecule id="G4SDH4-2"/>
    <property type="nucleotide sequence ID" value="NM_001269111.3"/>
</dbReference>
<dbReference type="RefSeq" id="NP_001256041.1">
    <molecule id="G4SDH4-1"/>
    <property type="nucleotide sequence ID" value="NM_001269112.3"/>
</dbReference>
<dbReference type="RefSeq" id="NP_001317793.1">
    <molecule id="G4SDH4-3"/>
    <property type="nucleotide sequence ID" value="NM_001330869.3"/>
</dbReference>
<dbReference type="SMR" id="G4SDH4"/>
<dbReference type="FunCoup" id="G4SDH4">
    <property type="interactions" value="1768"/>
</dbReference>
<dbReference type="STRING" id="6239.Y47D7A.14b.1"/>
<dbReference type="GlyCosmos" id="G4SDH4">
    <property type="glycosylation" value="1 site, No reported glycans"/>
</dbReference>
<dbReference type="PaxDb" id="6239-Y47D7A.14b"/>
<dbReference type="EnsemblMetazoa" id="Y47D7A.14a.1">
    <molecule id="G4SDH4-2"/>
    <property type="protein sequence ID" value="Y47D7A.14a.1"/>
    <property type="gene ID" value="WBGene00021626"/>
</dbReference>
<dbReference type="EnsemblMetazoa" id="Y47D7A.14b.1">
    <molecule id="G4SDH4-1"/>
    <property type="protein sequence ID" value="Y47D7A.14b.1"/>
    <property type="gene ID" value="WBGene00021626"/>
</dbReference>
<dbReference type="EnsemblMetazoa" id="Y47D7A.14c.1">
    <molecule id="G4SDH4-3"/>
    <property type="protein sequence ID" value="Y47D7A.14c.1"/>
    <property type="gene ID" value="WBGene00021626"/>
</dbReference>
<dbReference type="GeneID" id="178842"/>
<dbReference type="KEGG" id="cel:CELE_Y47D7A.14"/>
<dbReference type="UCSC" id="Y47D7A.14">
    <property type="organism name" value="c. elegans"/>
</dbReference>
<dbReference type="AGR" id="WB:WBGene00021626"/>
<dbReference type="CTD" id="178842"/>
<dbReference type="WormBase" id="Y47D7A.14a">
    <molecule id="G4SDH4-2"/>
    <property type="protein sequence ID" value="CE39189"/>
    <property type="gene ID" value="WBGene00021626"/>
    <property type="gene designation" value="rft-2"/>
</dbReference>
<dbReference type="WormBase" id="Y47D7A.14b">
    <molecule id="G4SDH4-1"/>
    <property type="protein sequence ID" value="CE45087"/>
    <property type="gene ID" value="WBGene00021626"/>
    <property type="gene designation" value="rft-2"/>
</dbReference>
<dbReference type="WormBase" id="Y47D7A.14c">
    <molecule id="G4SDH4-3"/>
    <property type="protein sequence ID" value="CE51669"/>
    <property type="gene ID" value="WBGene00021626"/>
    <property type="gene designation" value="rft-2"/>
</dbReference>
<dbReference type="eggNOG" id="KOG4255">
    <property type="taxonomic scope" value="Eukaryota"/>
</dbReference>
<dbReference type="GeneTree" id="ENSGT00390000003774"/>
<dbReference type="InParanoid" id="G4SDH4"/>
<dbReference type="OMA" id="ITWVIFV"/>
<dbReference type="OrthoDB" id="9995836at2759"/>
<dbReference type="PhylomeDB" id="G4SDH4"/>
<dbReference type="Reactome" id="R-CEL-196843">
    <property type="pathway name" value="Vitamin B2 (riboflavin) metabolism"/>
</dbReference>
<dbReference type="PRO" id="PR:G4SDH4"/>
<dbReference type="Proteomes" id="UP000001940">
    <property type="component" value="Chromosome V"/>
</dbReference>
<dbReference type="Bgee" id="WBGene00021626">
    <property type="expression patterns" value="Expressed in pharyngeal muscle cell (C elegans) and 4 other cell types or tissues"/>
</dbReference>
<dbReference type="ExpressionAtlas" id="G4SDH4">
    <property type="expression patterns" value="baseline and differential"/>
</dbReference>
<dbReference type="GO" id="GO:0005886">
    <property type="term" value="C:plasma membrane"/>
    <property type="evidence" value="ECO:0000318"/>
    <property type="project" value="GO_Central"/>
</dbReference>
<dbReference type="GO" id="GO:0032217">
    <property type="term" value="F:riboflavin transmembrane transporter activity"/>
    <property type="evidence" value="ECO:0000314"/>
    <property type="project" value="CACAO"/>
</dbReference>
<dbReference type="GO" id="GO:0036498">
    <property type="term" value="P:IRE1-mediated unfolded protein response"/>
    <property type="evidence" value="ECO:0007007"/>
    <property type="project" value="WormBase"/>
</dbReference>
<dbReference type="GO" id="GO:0032218">
    <property type="term" value="P:riboflavin transport"/>
    <property type="evidence" value="ECO:0000318"/>
    <property type="project" value="GO_Central"/>
</dbReference>
<dbReference type="InterPro" id="IPR009357">
    <property type="entry name" value="Riboflavin_transptr"/>
</dbReference>
<dbReference type="PANTHER" id="PTHR12929:SF10">
    <property type="entry name" value="RIBOFLAVIN TRANSPORTER"/>
    <property type="match status" value="1"/>
</dbReference>
<dbReference type="PANTHER" id="PTHR12929">
    <property type="entry name" value="SOLUTE CARRIER FAMILY 52"/>
    <property type="match status" value="1"/>
</dbReference>
<dbReference type="Pfam" id="PF06237">
    <property type="entry name" value="SLC52_ribofla_tr"/>
    <property type="match status" value="1"/>
</dbReference>
<organism evidence="10">
    <name type="scientific">Caenorhabditis elegans</name>
    <dbReference type="NCBI Taxonomy" id="6239"/>
    <lineage>
        <taxon>Eukaryota</taxon>
        <taxon>Metazoa</taxon>
        <taxon>Ecdysozoa</taxon>
        <taxon>Nematoda</taxon>
        <taxon>Chromadorea</taxon>
        <taxon>Rhabditida</taxon>
        <taxon>Rhabditina</taxon>
        <taxon>Rhabditomorpha</taxon>
        <taxon>Rhabditoidea</taxon>
        <taxon>Rhabditidae</taxon>
        <taxon>Peloderinae</taxon>
        <taxon>Caenorhabditis</taxon>
    </lineage>
</organism>